<gene>
    <name type="primary">Hsd17b8</name>
    <name type="synonym">H2-Ke6</name>
    <name type="synonym">Hke6</name>
</gene>
<name>DHB8_MOUSE</name>
<reference key="1">
    <citation type="journal article" date="1993" name="Mol. Cell. Biol.">
        <title>Downregulation of Ke 6, a novel gene encoded within the major histocompatibility complex, in murine polycystic kidney disease.</title>
        <authorList>
            <person name="Aziz N."/>
            <person name="Maxwell M.M."/>
            <person name="St Jacques B."/>
            <person name="Brenner B.M."/>
        </authorList>
    </citation>
    <scope>NUCLEOTIDE SEQUENCE [GENOMIC DNA]</scope>
    <source>
        <strain>DBA/2J</strain>
        <tissue>Kidney</tissue>
    </source>
</reference>
<reference key="2">
    <citation type="journal article" date="1993" name="Mol. Cell. Biol.">
        <authorList>
            <person name="Aziz N."/>
            <person name="Maxwell M.M."/>
            <person name="St Jacques B."/>
            <person name="Brenner B.M."/>
        </authorList>
    </citation>
    <scope>ERRATUM OF PUBMED:8441417</scope>
</reference>
<reference key="3">
    <citation type="journal article" date="1995" name="J. Biol. Chem.">
        <title>Ke 6 gene. Sequence and organization and aberrant regulation in murine polycystic kidney disease.</title>
        <authorList>
            <person name="Maxwell M.M."/>
            <person name="Nearing J."/>
            <person name="Aziz N."/>
        </authorList>
    </citation>
    <scope>NUCLEOTIDE SEQUENCE [GENOMIC DNA]</scope>
    <source>
        <strain>C57BL/6J</strain>
    </source>
</reference>
<reference key="4">
    <citation type="submission" date="1998-10" db="EMBL/GenBank/DDBJ databases">
        <title>Sequence of the mouse major histocomaptibility locus class II region.</title>
        <authorList>
            <person name="Rowen L."/>
            <person name="Qin S."/>
            <person name="Madan A."/>
            <person name="Loretz C."/>
            <person name="James R."/>
            <person name="Dors M."/>
            <person name="Mix L."/>
            <person name="Hall J."/>
            <person name="Lasky S."/>
            <person name="Hood L."/>
        </authorList>
    </citation>
    <scope>NUCLEOTIDE SEQUENCE [LARGE SCALE GENOMIC DNA]</scope>
    <source>
        <strain>129/SvJ</strain>
    </source>
</reference>
<reference key="5">
    <citation type="journal article" date="2004" name="Genome Res.">
        <title>The status, quality, and expansion of the NIH full-length cDNA project: the Mammalian Gene Collection (MGC).</title>
        <authorList>
            <consortium name="The MGC Project Team"/>
        </authorList>
    </citation>
    <scope>NUCLEOTIDE SEQUENCE [LARGE SCALE MRNA] (ISOFORM SHORT)</scope>
    <source>
        <tissue>Kidney</tissue>
    </source>
</reference>
<reference key="6">
    <citation type="journal article" date="1998" name="J. Biol. Chem.">
        <title>Characterization of Ke 6, a new 17beta-hydroxysteroid dehydrogenase, and its expression in gonadal tissues.</title>
        <authorList>
            <person name="Fomitcheva J."/>
            <person name="Baker M.E."/>
            <person name="Anderson E."/>
            <person name="Lee G.Y."/>
            <person name="Aziz N."/>
        </authorList>
    </citation>
    <scope>CATALYTIC ACTIVITY</scope>
    <scope>FUNCTION</scope>
    <scope>PATHWAY</scope>
    <scope>BIOPHYSICOCHEMICAL PROPERTIES</scope>
    <scope>TISSUE SPECIFICITY</scope>
</reference>
<reference key="7">
    <citation type="journal article" date="2005" name="J. Histochem. Cytochem.">
        <title>Localization of type 8 17beta-hydroxysteroid dehydrogenase mRNA in mouse tissues as studied by in situ hybridization.</title>
        <authorList>
            <person name="Pelletier G."/>
            <person name="Luu-The V."/>
            <person name="Li S."/>
            <person name="Labrie F."/>
        </authorList>
    </citation>
    <scope>TISSUE SPECIFICITY</scope>
</reference>
<reference key="8">
    <citation type="journal article" date="2006" name="Mol. Cell. Proteomics">
        <title>Comprehensive identification of phosphorylation sites in postsynaptic density preparations.</title>
        <authorList>
            <person name="Trinidad J.C."/>
            <person name="Specht C.G."/>
            <person name="Thalhammer A."/>
            <person name="Schoepfer R."/>
            <person name="Burlingame A.L."/>
        </authorList>
    </citation>
    <scope>IDENTIFICATION BY MASS SPECTROMETRY [LARGE SCALE ANALYSIS]</scope>
    <source>
        <tissue>Brain</tissue>
    </source>
</reference>
<reference key="9">
    <citation type="journal article" date="2010" name="Cell">
        <title>A tissue-specific atlas of mouse protein phosphorylation and expression.</title>
        <authorList>
            <person name="Huttlin E.L."/>
            <person name="Jedrychowski M.P."/>
            <person name="Elias J.E."/>
            <person name="Goswami T."/>
            <person name="Rad R."/>
            <person name="Beausoleil S.A."/>
            <person name="Villen J."/>
            <person name="Haas W."/>
            <person name="Sowa M.E."/>
            <person name="Gygi S.P."/>
        </authorList>
    </citation>
    <scope>PHOSPHORYLATION [LARGE SCALE ANALYSIS] AT SER-58</scope>
    <scope>IDENTIFICATION BY MASS SPECTROMETRY [LARGE SCALE ANALYSIS]</scope>
    <source>
        <tissue>Brain</tissue>
        <tissue>Brown adipose tissue</tissue>
        <tissue>Heart</tissue>
        <tissue>Kidney</tissue>
        <tissue>Liver</tissue>
        <tissue>Lung</tissue>
        <tissue>Pancreas</tissue>
        <tissue>Spleen</tissue>
        <tissue>Testis</tissue>
    </source>
</reference>
<reference key="10">
    <citation type="journal article" date="2013" name="Mol. Cell">
        <title>SIRT5-mediated lysine desuccinylation impacts diverse metabolic pathways.</title>
        <authorList>
            <person name="Park J."/>
            <person name="Chen Y."/>
            <person name="Tishkoff D.X."/>
            <person name="Peng C."/>
            <person name="Tan M."/>
            <person name="Dai L."/>
            <person name="Xie Z."/>
            <person name="Zhang Y."/>
            <person name="Zwaans B.M."/>
            <person name="Skinner M.E."/>
            <person name="Lombard D.B."/>
            <person name="Zhao Y."/>
        </authorList>
    </citation>
    <scope>SUCCINYLATION [LARGE SCALE ANALYSIS] AT LYS-158 AND LYS-171</scope>
    <scope>IDENTIFICATION BY MASS SPECTROMETRY [LARGE SCALE ANALYSIS]</scope>
    <source>
        <tissue>Liver</tissue>
    </source>
</reference>
<reference key="11">
    <citation type="journal article" date="2013" name="Proc. Natl. Acad. Sci. U.S.A.">
        <title>Label-free quantitative proteomics of the lysine acetylome in mitochondria identifies substrates of SIRT3 in metabolic pathways.</title>
        <authorList>
            <person name="Rardin M.J."/>
            <person name="Newman J.C."/>
            <person name="Held J.M."/>
            <person name="Cusack M.P."/>
            <person name="Sorensen D.J."/>
            <person name="Li B."/>
            <person name="Schilling B."/>
            <person name="Mooney S.D."/>
            <person name="Kahn C.R."/>
            <person name="Verdin E."/>
            <person name="Gibson B.W."/>
        </authorList>
    </citation>
    <scope>ACETYLATION [LARGE SCALE ANALYSIS] AT LYS-66</scope>
    <scope>IDENTIFICATION BY MASS SPECTROMETRY [LARGE SCALE ANALYSIS]</scope>
    <source>
        <tissue>Liver</tissue>
    </source>
</reference>
<feature type="chain" id="PRO_0000054599" description="(3R)-3-hydroxyacyl-CoA dehydrogenase">
    <location>
        <begin position="1"/>
        <end position="259"/>
    </location>
</feature>
<feature type="active site" description="Proton acceptor" evidence="3">
    <location>
        <position position="167"/>
    </location>
</feature>
<feature type="binding site" evidence="2">
    <location>
        <begin position="13"/>
        <end position="21"/>
    </location>
    <ligand>
        <name>NAD(+)</name>
        <dbReference type="ChEBI" id="CHEBI:57540"/>
    </ligand>
</feature>
<feature type="binding site" evidence="2">
    <location>
        <begin position="40"/>
        <end position="41"/>
    </location>
    <ligand>
        <name>NAD(+)</name>
        <dbReference type="ChEBI" id="CHEBI:57540"/>
    </ligand>
</feature>
<feature type="binding site" evidence="2">
    <location>
        <begin position="72"/>
        <end position="74"/>
    </location>
    <ligand>
        <name>NAD(+)</name>
        <dbReference type="ChEBI" id="CHEBI:57540"/>
    </ligand>
</feature>
<feature type="binding site" evidence="1">
    <location>
        <position position="154"/>
    </location>
    <ligand>
        <name>substrate</name>
    </ligand>
</feature>
<feature type="binding site" evidence="2">
    <location>
        <begin position="167"/>
        <end position="171"/>
    </location>
    <ligand>
        <name>NAD(+)</name>
        <dbReference type="ChEBI" id="CHEBI:57540"/>
    </ligand>
</feature>
<feature type="binding site" evidence="2">
    <location>
        <begin position="200"/>
        <end position="202"/>
    </location>
    <ligand>
        <name>NAD(+)</name>
        <dbReference type="ChEBI" id="CHEBI:57540"/>
    </ligand>
</feature>
<feature type="modified residue" description="Phosphoserine" evidence="8">
    <location>
        <position position="58"/>
    </location>
</feature>
<feature type="modified residue" description="N6-acetyllysine" evidence="9">
    <location>
        <position position="66"/>
    </location>
</feature>
<feature type="modified residue" description="N6-succinyllysine" evidence="10">
    <location>
        <position position="158"/>
    </location>
</feature>
<feature type="modified residue" description="N6-succinyllysine" evidence="10">
    <location>
        <position position="171"/>
    </location>
</feature>
<feature type="splice variant" id="VSP_006030" description="In isoform Long." evidence="7">
    <original>GLFM</original>
    <variation>MRPSWGGGQENRTQVVMRK</variation>
    <location>
        <begin position="256"/>
        <end position="259"/>
    </location>
</feature>
<feature type="sequence conflict" description="In Ref. 1; AAC53573/AAC53574." evidence="7" ref="1">
    <original>E</original>
    <variation>EG</variation>
    <location>
        <position position="229"/>
    </location>
</feature>
<organism>
    <name type="scientific">Mus musculus</name>
    <name type="common">Mouse</name>
    <dbReference type="NCBI Taxonomy" id="10090"/>
    <lineage>
        <taxon>Eukaryota</taxon>
        <taxon>Metazoa</taxon>
        <taxon>Chordata</taxon>
        <taxon>Craniata</taxon>
        <taxon>Vertebrata</taxon>
        <taxon>Euteleostomi</taxon>
        <taxon>Mammalia</taxon>
        <taxon>Eutheria</taxon>
        <taxon>Euarchontoglires</taxon>
        <taxon>Glires</taxon>
        <taxon>Rodentia</taxon>
        <taxon>Myomorpha</taxon>
        <taxon>Muroidea</taxon>
        <taxon>Muridae</taxon>
        <taxon>Murinae</taxon>
        <taxon>Mus</taxon>
        <taxon>Mus</taxon>
    </lineage>
</organism>
<dbReference type="EC" id="1.1.1.n12" evidence="2"/>
<dbReference type="EC" id="1.1.1.62" evidence="5"/>
<dbReference type="EC" id="1.1.1.239" evidence="5"/>
<dbReference type="EMBL" id="U34072">
    <property type="protein sequence ID" value="AAC53573.1"/>
    <property type="molecule type" value="Genomic_DNA"/>
</dbReference>
<dbReference type="EMBL" id="U34072">
    <property type="protein sequence ID" value="AAC53574.1"/>
    <property type="molecule type" value="Genomic_DNA"/>
</dbReference>
<dbReference type="EMBL" id="AF100956">
    <property type="protein sequence ID" value="AAC69902.1"/>
    <property type="status" value="ALT_SEQ"/>
    <property type="molecule type" value="Genomic_DNA"/>
</dbReference>
<dbReference type="EMBL" id="BC086927">
    <property type="protein sequence ID" value="AAH86927.1"/>
    <property type="molecule type" value="mRNA"/>
</dbReference>
<dbReference type="CCDS" id="CCDS50071.1">
    <molecule id="P50171-1"/>
</dbReference>
<dbReference type="PIR" id="A48154">
    <property type="entry name" value="A48154"/>
</dbReference>
<dbReference type="RefSeq" id="NP_038571.2">
    <molecule id="P50171-1"/>
    <property type="nucleotide sequence ID" value="NM_013543.2"/>
</dbReference>
<dbReference type="SMR" id="P50171"/>
<dbReference type="BioGRID" id="200159">
    <property type="interactions" value="5"/>
</dbReference>
<dbReference type="FunCoup" id="P50171">
    <property type="interactions" value="991"/>
</dbReference>
<dbReference type="STRING" id="10090.ENSMUSP00000038069"/>
<dbReference type="GlyGen" id="P50171">
    <property type="glycosylation" value="1 site, 1 O-linked glycan (1 site)"/>
</dbReference>
<dbReference type="iPTMnet" id="P50171"/>
<dbReference type="PhosphoSitePlus" id="P50171"/>
<dbReference type="SwissPalm" id="P50171"/>
<dbReference type="REPRODUCTION-2DPAGE" id="P50171"/>
<dbReference type="jPOST" id="P50171"/>
<dbReference type="PaxDb" id="10090-ENSMUSP00000038069"/>
<dbReference type="PeptideAtlas" id="P50171"/>
<dbReference type="ProteomicsDB" id="277329">
    <molecule id="P50171-1"/>
</dbReference>
<dbReference type="ProteomicsDB" id="277330">
    <molecule id="P50171-2"/>
</dbReference>
<dbReference type="Pumba" id="P50171"/>
<dbReference type="Antibodypedia" id="28972">
    <property type="antibodies" value="235 antibodies from 30 providers"/>
</dbReference>
<dbReference type="DNASU" id="14979"/>
<dbReference type="Ensembl" id="ENSMUST00000045467.14">
    <molecule id="P50171-1"/>
    <property type="protein sequence ID" value="ENSMUSP00000038069.8"/>
    <property type="gene ID" value="ENSMUSG00000073422.12"/>
</dbReference>
<dbReference type="Ensembl" id="ENSMUST00000237759.2">
    <molecule id="P50171-2"/>
    <property type="protein sequence ID" value="ENSMUSP00000157769.2"/>
    <property type="gene ID" value="ENSMUSG00000073422.12"/>
</dbReference>
<dbReference type="GeneID" id="14979"/>
<dbReference type="KEGG" id="mmu:14979"/>
<dbReference type="UCSC" id="uc008cat.2">
    <molecule id="P50171-1"/>
    <property type="organism name" value="mouse"/>
</dbReference>
<dbReference type="AGR" id="MGI:95911"/>
<dbReference type="CTD" id="7923"/>
<dbReference type="MGI" id="MGI:95911">
    <property type="gene designation" value="Hsd17b8"/>
</dbReference>
<dbReference type="VEuPathDB" id="HostDB:ENSMUSG00000073422"/>
<dbReference type="eggNOG" id="KOG1200">
    <property type="taxonomic scope" value="Eukaryota"/>
</dbReference>
<dbReference type="GeneTree" id="ENSGT00940000160668"/>
<dbReference type="HOGENOM" id="CLU_010194_1_3_1"/>
<dbReference type="InParanoid" id="P50171"/>
<dbReference type="OMA" id="LFGVQCD"/>
<dbReference type="OrthoDB" id="31399at9989"/>
<dbReference type="PhylomeDB" id="P50171"/>
<dbReference type="TreeFam" id="TF313099"/>
<dbReference type="Reactome" id="R-MMU-75105">
    <property type="pathway name" value="Fatty acyl-CoA biosynthesis"/>
</dbReference>
<dbReference type="SABIO-RK" id="P50171"/>
<dbReference type="UniPathway" id="UPA00094"/>
<dbReference type="UniPathway" id="UPA00660"/>
<dbReference type="UniPathway" id="UPA00769"/>
<dbReference type="BioGRID-ORCS" id="14979">
    <property type="hits" value="3 hits in 80 CRISPR screens"/>
</dbReference>
<dbReference type="CD-CODE" id="CE726F99">
    <property type="entry name" value="Postsynaptic density"/>
</dbReference>
<dbReference type="ChiTaRS" id="H2-Ke6">
    <property type="organism name" value="mouse"/>
</dbReference>
<dbReference type="PRO" id="PR:P50171"/>
<dbReference type="Proteomes" id="UP000000589">
    <property type="component" value="Chromosome 17"/>
</dbReference>
<dbReference type="RNAct" id="P50171">
    <property type="molecule type" value="protein"/>
</dbReference>
<dbReference type="Bgee" id="ENSMUSG00000073422">
    <property type="expression patterns" value="Expressed in adrenal gland and 66 other cell types or tissues"/>
</dbReference>
<dbReference type="ExpressionAtlas" id="P50171">
    <property type="expression patterns" value="baseline and differential"/>
</dbReference>
<dbReference type="GO" id="GO:0016020">
    <property type="term" value="C:membrane"/>
    <property type="evidence" value="ECO:0000314"/>
    <property type="project" value="MGI"/>
</dbReference>
<dbReference type="GO" id="GO:0005740">
    <property type="term" value="C:mitochondrial envelope"/>
    <property type="evidence" value="ECO:0000314"/>
    <property type="project" value="MGI"/>
</dbReference>
<dbReference type="GO" id="GO:0005759">
    <property type="term" value="C:mitochondrial matrix"/>
    <property type="evidence" value="ECO:0007669"/>
    <property type="project" value="UniProtKB-SubCell"/>
</dbReference>
<dbReference type="GO" id="GO:0005739">
    <property type="term" value="C:mitochondrion"/>
    <property type="evidence" value="ECO:0007005"/>
    <property type="project" value="MGI"/>
</dbReference>
<dbReference type="GO" id="GO:1990204">
    <property type="term" value="C:oxidoreductase complex"/>
    <property type="evidence" value="ECO:0007669"/>
    <property type="project" value="Ensembl"/>
</dbReference>
<dbReference type="GO" id="GO:0005886">
    <property type="term" value="C:plasma membrane"/>
    <property type="evidence" value="ECO:0000314"/>
    <property type="project" value="MGI"/>
</dbReference>
<dbReference type="GO" id="GO:0106386">
    <property type="term" value="F:(3R)-hydroxyacyl-CoA dehydrogenase (NAD+) activity"/>
    <property type="evidence" value="ECO:0000250"/>
    <property type="project" value="UniProtKB"/>
</dbReference>
<dbReference type="GO" id="GO:0004303">
    <property type="term" value="F:estradiol 17-beta-dehydrogenase [NAD(P)+] activity"/>
    <property type="evidence" value="ECO:0000314"/>
    <property type="project" value="MGI"/>
</dbReference>
<dbReference type="GO" id="GO:0070404">
    <property type="term" value="F:NADH binding"/>
    <property type="evidence" value="ECO:0000250"/>
    <property type="project" value="UniProtKB"/>
</dbReference>
<dbReference type="GO" id="GO:0047035">
    <property type="term" value="F:testosterone dehydrogenase (NAD+) activity"/>
    <property type="evidence" value="ECO:0000314"/>
    <property type="project" value="MGI"/>
</dbReference>
<dbReference type="GO" id="GO:0008209">
    <property type="term" value="P:androgen metabolic process"/>
    <property type="evidence" value="ECO:0000314"/>
    <property type="project" value="MGI"/>
</dbReference>
<dbReference type="GO" id="GO:0006703">
    <property type="term" value="P:estrogen biosynthetic process"/>
    <property type="evidence" value="ECO:0000250"/>
    <property type="project" value="UniProtKB"/>
</dbReference>
<dbReference type="GO" id="GO:0008210">
    <property type="term" value="P:estrogen metabolic process"/>
    <property type="evidence" value="ECO:0000314"/>
    <property type="project" value="MGI"/>
</dbReference>
<dbReference type="GO" id="GO:0006633">
    <property type="term" value="P:fatty acid biosynthetic process"/>
    <property type="evidence" value="ECO:0000250"/>
    <property type="project" value="UniProtKB"/>
</dbReference>
<dbReference type="GO" id="GO:0051290">
    <property type="term" value="P:protein heterotetramerization"/>
    <property type="evidence" value="ECO:0000250"/>
    <property type="project" value="UniProtKB"/>
</dbReference>
<dbReference type="FunFam" id="3.40.50.720:FF:000231">
    <property type="entry name" value="Estradiol 17-beta-dehydrogenase 8"/>
    <property type="match status" value="1"/>
</dbReference>
<dbReference type="Gene3D" id="3.40.50.720">
    <property type="entry name" value="NAD(P)-binding Rossmann-like Domain"/>
    <property type="match status" value="1"/>
</dbReference>
<dbReference type="InterPro" id="IPR036291">
    <property type="entry name" value="NAD(P)-bd_dom_sf"/>
</dbReference>
<dbReference type="InterPro" id="IPR020904">
    <property type="entry name" value="Sc_DH/Rdtase_CS"/>
</dbReference>
<dbReference type="InterPro" id="IPR002347">
    <property type="entry name" value="SDR_fam"/>
</dbReference>
<dbReference type="NCBIfam" id="NF009466">
    <property type="entry name" value="PRK12826.1-2"/>
    <property type="match status" value="1"/>
</dbReference>
<dbReference type="PANTHER" id="PTHR42760:SF83">
    <property type="entry name" value="(3R)-3-HYDROXYACYL-COA DEHYDROGENASE"/>
    <property type="match status" value="1"/>
</dbReference>
<dbReference type="PANTHER" id="PTHR42760">
    <property type="entry name" value="SHORT-CHAIN DEHYDROGENASES/REDUCTASES FAMILY MEMBER"/>
    <property type="match status" value="1"/>
</dbReference>
<dbReference type="Pfam" id="PF13561">
    <property type="entry name" value="adh_short_C2"/>
    <property type="match status" value="1"/>
</dbReference>
<dbReference type="PRINTS" id="PR00081">
    <property type="entry name" value="GDHRDH"/>
</dbReference>
<dbReference type="PRINTS" id="PR00080">
    <property type="entry name" value="SDRFAMILY"/>
</dbReference>
<dbReference type="SMART" id="SM00822">
    <property type="entry name" value="PKS_KR"/>
    <property type="match status" value="1"/>
</dbReference>
<dbReference type="SUPFAM" id="SSF51735">
    <property type="entry name" value="NAD(P)-binding Rossmann-fold domains"/>
    <property type="match status" value="1"/>
</dbReference>
<dbReference type="PROSITE" id="PS00061">
    <property type="entry name" value="ADH_SHORT"/>
    <property type="match status" value="1"/>
</dbReference>
<keyword id="KW-0007">Acetylation</keyword>
<keyword id="KW-0025">Alternative splicing</keyword>
<keyword id="KW-0275">Fatty acid biosynthesis</keyword>
<keyword id="KW-0276">Fatty acid metabolism</keyword>
<keyword id="KW-0444">Lipid biosynthesis</keyword>
<keyword id="KW-0443">Lipid metabolism</keyword>
<keyword id="KW-0496">Mitochondrion</keyword>
<keyword id="KW-0520">NAD</keyword>
<keyword id="KW-0560">Oxidoreductase</keyword>
<keyword id="KW-0597">Phosphoprotein</keyword>
<keyword id="KW-1185">Reference proteome</keyword>
<keyword id="KW-0752">Steroid biosynthesis</keyword>
<comment type="function">
    <text evidence="2 5">Required for the solubility and assembly of the heterotetramer 3-ketoacyl-[acyl carrier protein] (ACP) reductase functional complex (KAR or KAR1) that forms part of the mitochondrial fatty acid synthase (mtFAS). Alpha-subunit of the KAR complex, acts as scaffold protein, required for the stability of carbonyl reductase type-4 (CBR4, beta-subunit of the KAR complex) and for its 3-ketoacyl-ACP reductase activity, thereby participating in mitochondrial fatty acid biosynthesis. Catalyzes the NAD-dependent conversion of (3R)-3-hydroxyacyl-CoA into 3-ketoacyl-CoA (3-oxoacyl-CoA) with no chain length preference, this enzymatic activity is not needed for the KAR function. Prefers (3R)-3-hydroxyacyl-CoA over (3S)-3-hydroxyacyl-CoA and displays enzymatic activity only in the presence of NAD(+)(H). Cooperates with enoyl-CoA hydratase 1 in mitochondria, together they constitute an alternative route to the auxiliary enzyme pathways for the breakdown of Z-PUFA (cis polyunsaturated fatty acid) enoyl-esters (By similarity). NAD-dependent 17-beta-hydroxysteroid dehydrogenase with highest activity towards estradiol. It efficiently catalyzes the oxidation of estradiol (E2), testosterone, and dihydrotestosterone. Primarily an oxidative enzyme, it can switch to a reductive mode determined in the appropriate physiologic milieu and catalyze the reduction of estrone (E1) to form biologically active estradiol (E2) (PubMed:9712896).</text>
</comment>
<comment type="catalytic activity">
    <reaction evidence="2">
        <text>a (3R)-3-hydroxyacyl-CoA + NAD(+) = a 3-oxoacyl-CoA + NADH + H(+)</text>
        <dbReference type="Rhea" id="RHEA:32711"/>
        <dbReference type="ChEBI" id="CHEBI:15378"/>
        <dbReference type="ChEBI" id="CHEBI:57319"/>
        <dbReference type="ChEBI" id="CHEBI:57540"/>
        <dbReference type="ChEBI" id="CHEBI:57945"/>
        <dbReference type="ChEBI" id="CHEBI:90726"/>
        <dbReference type="EC" id="1.1.1.n12"/>
    </reaction>
    <physiologicalReaction direction="left-to-right" evidence="2">
        <dbReference type="Rhea" id="RHEA:32712"/>
    </physiologicalReaction>
</comment>
<comment type="catalytic activity">
    <reaction evidence="5">
        <text>17beta-estradiol + NAD(+) = estrone + NADH + H(+)</text>
        <dbReference type="Rhea" id="RHEA:24612"/>
        <dbReference type="ChEBI" id="CHEBI:15378"/>
        <dbReference type="ChEBI" id="CHEBI:16469"/>
        <dbReference type="ChEBI" id="CHEBI:17263"/>
        <dbReference type="ChEBI" id="CHEBI:57540"/>
        <dbReference type="ChEBI" id="CHEBI:57945"/>
        <dbReference type="EC" id="1.1.1.62"/>
    </reaction>
    <physiologicalReaction direction="left-to-right" evidence="5">
        <dbReference type="Rhea" id="RHEA:24613"/>
    </physiologicalReaction>
    <physiologicalReaction direction="right-to-left" evidence="5">
        <dbReference type="Rhea" id="RHEA:24614"/>
    </physiologicalReaction>
</comment>
<comment type="catalytic activity">
    <reaction evidence="5">
        <text>testosterone + NAD(+) = androst-4-ene-3,17-dione + NADH + H(+)</text>
        <dbReference type="Rhea" id="RHEA:14929"/>
        <dbReference type="ChEBI" id="CHEBI:15378"/>
        <dbReference type="ChEBI" id="CHEBI:16422"/>
        <dbReference type="ChEBI" id="CHEBI:17347"/>
        <dbReference type="ChEBI" id="CHEBI:57540"/>
        <dbReference type="ChEBI" id="CHEBI:57945"/>
        <dbReference type="EC" id="1.1.1.239"/>
    </reaction>
    <physiologicalReaction direction="left-to-right" evidence="5">
        <dbReference type="Rhea" id="RHEA:14930"/>
    </physiologicalReaction>
</comment>
<comment type="catalytic activity">
    <reaction evidence="5">
        <text>17beta-hydroxy-5alpha-androstan-3-one + NAD(+) = 5alpha-androstan-3,17-dione + NADH + H(+)</text>
        <dbReference type="Rhea" id="RHEA:41992"/>
        <dbReference type="ChEBI" id="CHEBI:15378"/>
        <dbReference type="ChEBI" id="CHEBI:15994"/>
        <dbReference type="ChEBI" id="CHEBI:16330"/>
        <dbReference type="ChEBI" id="CHEBI:57540"/>
        <dbReference type="ChEBI" id="CHEBI:57945"/>
    </reaction>
    <physiologicalReaction direction="left-to-right" evidence="5">
        <dbReference type="Rhea" id="RHEA:41993"/>
    </physiologicalReaction>
</comment>
<comment type="biophysicochemical properties">
    <kinetics>
        <KM evidence="5">0.11 uM for estradiol</KM>
        <KM evidence="5">0.422 uM for testosterone</KM>
        <KM evidence="5">0.368 uM for estrone</KM>
        <KM evidence="5">0.36 uM for dihydrotestosterone</KM>
        <Vmax evidence="5">0.405 nmol/min/mg enzyme for estradiol as substrate</Vmax>
        <Vmax evidence="5">0.123 nmol/min/mg enzyme for testosterone as substrate</Vmax>
        <Vmax evidence="5">0.186 nmol/min/mg enzyme for estrone as substrate</Vmax>
        <Vmax evidence="5">0.081 nmol/min/mg enzyme for dihydrotestosterone as substrate</Vmax>
    </kinetics>
</comment>
<comment type="pathway">
    <text evidence="2">Lipid metabolism; fatty acid biosynthesis.</text>
</comment>
<comment type="pathway">
    <text evidence="5">Steroid biosynthesis; estrogen biosynthesis.</text>
</comment>
<comment type="pathway">
    <text evidence="2">Lipid metabolism; mitochondrial fatty acid beta-oxidation.</text>
</comment>
<comment type="subunit">
    <text evidence="2">Heterotetramer with CBR4; contains two molecules of HSD17B8 and CBR4.</text>
</comment>
<comment type="subcellular location">
    <subcellularLocation>
        <location evidence="2">Mitochondrion matrix</location>
    </subcellularLocation>
</comment>
<comment type="alternative products">
    <event type="alternative splicing"/>
    <isoform>
        <id>P50171-1</id>
        <name>Short</name>
        <sequence type="displayed"/>
    </isoform>
    <isoform>
        <id>P50171-2</id>
        <name>Long</name>
        <sequence type="described" ref="VSP_006030"/>
    </isoform>
</comment>
<comment type="tissue specificity">
    <text evidence="4 5">Kidney, liver, testis, ovary and spleen (PubMed:15923359, PubMed:9712896). Oviduct, uterus, mammary gland, vagina, prostate, clitoral gland and moderately heart, dorsal skin, brain and lung (PubMed:15923359).</text>
</comment>
<comment type="similarity">
    <text evidence="7">Belongs to the short-chain dehydrogenases/reductases (SDR) family.</text>
</comment>
<comment type="sequence caution" evidence="7">
    <conflict type="erroneous gene model prediction">
        <sequence resource="EMBL-CDS" id="AAC69902"/>
    </conflict>
</comment>
<proteinExistence type="evidence at protein level"/>
<accession>P50171</accession>
<accession>Q5M9K0</accession>
<accession>Q60958</accession>
<accession>Q60959</accession>
<accession>Q9Z1W2</accession>
<protein>
    <recommendedName>
        <fullName>(3R)-3-hydroxyacyl-CoA dehydrogenase</fullName>
        <ecNumber evidence="2">1.1.1.n12</ecNumber>
    </recommendedName>
    <alternativeName>
        <fullName>17-beta-hydroxysteroid dehydrogenase 8</fullName>
        <shortName>17-beta-HSD 8</shortName>
    </alternativeName>
    <alternativeName>
        <fullName evidence="2">3-ketoacyl-[acyl-carrier-protein] reductase alpha subunit</fullName>
        <shortName evidence="2">KAR alpha subunit</shortName>
    </alternativeName>
    <alternativeName>
        <fullName>3-oxoacyl-[acyl-carrier-protein] reductase</fullName>
    </alternativeName>
    <alternativeName>
        <fullName>Estradiol 17-beta-dehydrogenase 8</fullName>
        <ecNumber evidence="5">1.1.1.62</ecNumber>
    </alternativeName>
    <alternativeName>
        <fullName evidence="6">Protein Ke6</fullName>
        <shortName evidence="6">Ke-6</shortName>
    </alternativeName>
    <alternativeName>
        <fullName>Testosterone 17-beta-dehydrogenase 8</fullName>
        <ecNumber evidence="5">1.1.1.239</ecNumber>
    </alternativeName>
</protein>
<evidence type="ECO:0000250" key="1"/>
<evidence type="ECO:0000250" key="2">
    <source>
        <dbReference type="UniProtKB" id="Q92506"/>
    </source>
</evidence>
<evidence type="ECO:0000255" key="3">
    <source>
        <dbReference type="PROSITE-ProRule" id="PRU10001"/>
    </source>
</evidence>
<evidence type="ECO:0000269" key="4">
    <source>
    </source>
</evidence>
<evidence type="ECO:0000269" key="5">
    <source>
    </source>
</evidence>
<evidence type="ECO:0000303" key="6">
    <source>
    </source>
</evidence>
<evidence type="ECO:0000305" key="7"/>
<evidence type="ECO:0007744" key="8">
    <source>
    </source>
</evidence>
<evidence type="ECO:0007744" key="9">
    <source>
    </source>
</evidence>
<evidence type="ECO:0007744" key="10">
    <source>
    </source>
</evidence>
<sequence>MASQLRLRSALALVTGAGSGIGRAISVRLAAEGAAVAACDLDGAAAQDTVRLLGSPGSEDGAPRGKHAAFQADVSQGPAARRLLEEVQACFSRPPSVVVSCAGITRDEFLLHMSEEDWDRVIAVNLKGTFLVTQAAAQALVSSGGRGSIINISSIIGKVGNIGQTNYASSKAGVIGLTQTAARELGRHGIRCNSVLPGFIATPMTQKMPEKVKDKVTAMIPLGHMGDPEDVADVVAFLASEDSGYITGASVEVSGGLFM</sequence>